<name>TGT_SHISS</name>
<dbReference type="EC" id="2.4.2.29" evidence="1"/>
<dbReference type="EMBL" id="CP000038">
    <property type="protein sequence ID" value="AAZ87159.1"/>
    <property type="molecule type" value="Genomic_DNA"/>
</dbReference>
<dbReference type="RefSeq" id="WP_000667319.1">
    <property type="nucleotide sequence ID" value="NC_007384.1"/>
</dbReference>
<dbReference type="SMR" id="Q3Z503"/>
<dbReference type="GeneID" id="93777054"/>
<dbReference type="KEGG" id="ssn:SSON_0383"/>
<dbReference type="HOGENOM" id="CLU_022060_0_1_6"/>
<dbReference type="UniPathway" id="UPA00392"/>
<dbReference type="Proteomes" id="UP000002529">
    <property type="component" value="Chromosome"/>
</dbReference>
<dbReference type="GO" id="GO:0005829">
    <property type="term" value="C:cytosol"/>
    <property type="evidence" value="ECO:0007669"/>
    <property type="project" value="TreeGrafter"/>
</dbReference>
<dbReference type="GO" id="GO:0046872">
    <property type="term" value="F:metal ion binding"/>
    <property type="evidence" value="ECO:0007669"/>
    <property type="project" value="UniProtKB-KW"/>
</dbReference>
<dbReference type="GO" id="GO:0008479">
    <property type="term" value="F:tRNA-guanosine(34) queuine transglycosylase activity"/>
    <property type="evidence" value="ECO:0007669"/>
    <property type="project" value="UniProtKB-UniRule"/>
</dbReference>
<dbReference type="GO" id="GO:0008616">
    <property type="term" value="P:queuosine biosynthetic process"/>
    <property type="evidence" value="ECO:0007669"/>
    <property type="project" value="UniProtKB-UniRule"/>
</dbReference>
<dbReference type="GO" id="GO:0002099">
    <property type="term" value="P:tRNA wobble guanine modification"/>
    <property type="evidence" value="ECO:0007669"/>
    <property type="project" value="TreeGrafter"/>
</dbReference>
<dbReference type="GO" id="GO:0101030">
    <property type="term" value="P:tRNA-guanine transglycosylation"/>
    <property type="evidence" value="ECO:0007669"/>
    <property type="project" value="InterPro"/>
</dbReference>
<dbReference type="FunFam" id="3.20.20.105:FF:000001">
    <property type="entry name" value="Queuine tRNA-ribosyltransferase"/>
    <property type="match status" value="1"/>
</dbReference>
<dbReference type="Gene3D" id="3.20.20.105">
    <property type="entry name" value="Queuine tRNA-ribosyltransferase-like"/>
    <property type="match status" value="1"/>
</dbReference>
<dbReference type="HAMAP" id="MF_00168">
    <property type="entry name" value="Q_tRNA_Tgt"/>
    <property type="match status" value="1"/>
</dbReference>
<dbReference type="InterPro" id="IPR050076">
    <property type="entry name" value="ArchSynthase1/Queuine_TRR"/>
</dbReference>
<dbReference type="InterPro" id="IPR004803">
    <property type="entry name" value="TGT"/>
</dbReference>
<dbReference type="InterPro" id="IPR036511">
    <property type="entry name" value="TGT-like_sf"/>
</dbReference>
<dbReference type="InterPro" id="IPR002616">
    <property type="entry name" value="tRNA_ribo_trans-like"/>
</dbReference>
<dbReference type="NCBIfam" id="TIGR00430">
    <property type="entry name" value="Q_tRNA_tgt"/>
    <property type="match status" value="1"/>
</dbReference>
<dbReference type="NCBIfam" id="TIGR00449">
    <property type="entry name" value="tgt_general"/>
    <property type="match status" value="1"/>
</dbReference>
<dbReference type="PANTHER" id="PTHR46499">
    <property type="entry name" value="QUEUINE TRNA-RIBOSYLTRANSFERASE"/>
    <property type="match status" value="1"/>
</dbReference>
<dbReference type="PANTHER" id="PTHR46499:SF1">
    <property type="entry name" value="QUEUINE TRNA-RIBOSYLTRANSFERASE"/>
    <property type="match status" value="1"/>
</dbReference>
<dbReference type="Pfam" id="PF01702">
    <property type="entry name" value="TGT"/>
    <property type="match status" value="1"/>
</dbReference>
<dbReference type="SUPFAM" id="SSF51713">
    <property type="entry name" value="tRNA-guanine transglycosylase"/>
    <property type="match status" value="1"/>
</dbReference>
<accession>Q3Z503</accession>
<keyword id="KW-0328">Glycosyltransferase</keyword>
<keyword id="KW-0479">Metal-binding</keyword>
<keyword id="KW-0671">Queuosine biosynthesis</keyword>
<keyword id="KW-1185">Reference proteome</keyword>
<keyword id="KW-0808">Transferase</keyword>
<keyword id="KW-0819">tRNA processing</keyword>
<keyword id="KW-0862">Zinc</keyword>
<comment type="function">
    <text evidence="1">Catalyzes the base-exchange of a guanine (G) residue with the queuine precursor 7-aminomethyl-7-deazaguanine (PreQ1) at position 34 (anticodon wobble position) in tRNAs with GU(N) anticodons (tRNA-Asp, -Asn, -His and -Tyr). Catalysis occurs through a double-displacement mechanism. The nucleophile active site attacks the C1' of nucleotide 34 to detach the guanine base from the RNA, forming a covalent enzyme-RNA intermediate. The proton acceptor active site deprotonates the incoming PreQ1, allowing a nucleophilic attack on the C1' of the ribose to form the product. After dissociation, two additional enzymatic reactions on the tRNA convert PreQ1 to queuine (Q), resulting in the hypermodified nucleoside queuosine (7-(((4,5-cis-dihydroxy-2-cyclopenten-1-yl)amino)methyl)-7-deazaguanosine).</text>
</comment>
<comment type="catalytic activity">
    <reaction evidence="1">
        <text>7-aminomethyl-7-carbaguanine + guanosine(34) in tRNA = 7-aminomethyl-7-carbaguanosine(34) in tRNA + guanine</text>
        <dbReference type="Rhea" id="RHEA:24104"/>
        <dbReference type="Rhea" id="RHEA-COMP:10341"/>
        <dbReference type="Rhea" id="RHEA-COMP:10342"/>
        <dbReference type="ChEBI" id="CHEBI:16235"/>
        <dbReference type="ChEBI" id="CHEBI:58703"/>
        <dbReference type="ChEBI" id="CHEBI:74269"/>
        <dbReference type="ChEBI" id="CHEBI:82833"/>
        <dbReference type="EC" id="2.4.2.29"/>
    </reaction>
</comment>
<comment type="cofactor">
    <cofactor evidence="1">
        <name>Zn(2+)</name>
        <dbReference type="ChEBI" id="CHEBI:29105"/>
    </cofactor>
    <text evidence="1">Binds 1 zinc ion per subunit.</text>
</comment>
<comment type="pathway">
    <text evidence="1">tRNA modification; tRNA-queuosine biosynthesis.</text>
</comment>
<comment type="subunit">
    <text evidence="1">Homodimer. Within each dimer, one monomer is responsible for RNA recognition and catalysis, while the other monomer binds to the replacement base PreQ1.</text>
</comment>
<comment type="similarity">
    <text evidence="1">Belongs to the queuine tRNA-ribosyltransferase family.</text>
</comment>
<evidence type="ECO:0000255" key="1">
    <source>
        <dbReference type="HAMAP-Rule" id="MF_00168"/>
    </source>
</evidence>
<gene>
    <name evidence="1" type="primary">tgt</name>
    <name type="ordered locus">SSON_0383</name>
</gene>
<sequence>MKFELDTTDGRARRGRLVFDRGVVETPCFMPVGTYGTVKGMTPEEVEATGAQIILGNTFHLWLRPGQEIMKLHGDLHDFMQWKGPILTDSGGFQVFSLGDIRKITEQGVHFRNPINGDPIFLDPEKSMEIQYDLGSDIVMIFDECTPYPADWDYAKRSMEMSLRWAKRSRERFDSLGNKNALFGIIQGSVYEDLRDISVKGLVDIGFDGYAVGGLAVGEPKADMHRILEHVCPQIPADKPRYLMGVGKPEDLVEGVRRGIDMFDCVMPTRNARNGHLFVTDGVVKIRNAKYKSDTGPLDPECDCYTCRNYSRAYLHHLDRCNEILGARLNTIHNLRYYQRLMAGLRKAIEEGKLESFVTDFYQRQGREVPPLNVD</sequence>
<feature type="chain" id="PRO_1000016857" description="Queuine tRNA-ribosyltransferase">
    <location>
        <begin position="1"/>
        <end position="375"/>
    </location>
</feature>
<feature type="region of interest" description="RNA binding" evidence="1">
    <location>
        <begin position="245"/>
        <end position="251"/>
    </location>
</feature>
<feature type="region of interest" description="RNA binding; important for wobble base 34 recognition" evidence="1">
    <location>
        <begin position="269"/>
        <end position="273"/>
    </location>
</feature>
<feature type="active site" description="Proton acceptor" evidence="1">
    <location>
        <position position="89"/>
    </location>
</feature>
<feature type="active site" description="Nucleophile" evidence="1">
    <location>
        <position position="264"/>
    </location>
</feature>
<feature type="binding site" evidence="1">
    <location>
        <begin position="89"/>
        <end position="93"/>
    </location>
    <ligand>
        <name>substrate</name>
    </ligand>
</feature>
<feature type="binding site" evidence="1">
    <location>
        <position position="143"/>
    </location>
    <ligand>
        <name>substrate</name>
    </ligand>
</feature>
<feature type="binding site" evidence="1">
    <location>
        <position position="187"/>
    </location>
    <ligand>
        <name>substrate</name>
    </ligand>
</feature>
<feature type="binding site" evidence="1">
    <location>
        <position position="214"/>
    </location>
    <ligand>
        <name>substrate</name>
    </ligand>
</feature>
<feature type="binding site" evidence="1">
    <location>
        <position position="302"/>
    </location>
    <ligand>
        <name>Zn(2+)</name>
        <dbReference type="ChEBI" id="CHEBI:29105"/>
    </ligand>
</feature>
<feature type="binding site" evidence="1">
    <location>
        <position position="304"/>
    </location>
    <ligand>
        <name>Zn(2+)</name>
        <dbReference type="ChEBI" id="CHEBI:29105"/>
    </ligand>
</feature>
<feature type="binding site" evidence="1">
    <location>
        <position position="307"/>
    </location>
    <ligand>
        <name>Zn(2+)</name>
        <dbReference type="ChEBI" id="CHEBI:29105"/>
    </ligand>
</feature>
<feature type="binding site" evidence="1">
    <location>
        <position position="333"/>
    </location>
    <ligand>
        <name>Zn(2+)</name>
        <dbReference type="ChEBI" id="CHEBI:29105"/>
    </ligand>
</feature>
<proteinExistence type="inferred from homology"/>
<organism>
    <name type="scientific">Shigella sonnei (strain Ss046)</name>
    <dbReference type="NCBI Taxonomy" id="300269"/>
    <lineage>
        <taxon>Bacteria</taxon>
        <taxon>Pseudomonadati</taxon>
        <taxon>Pseudomonadota</taxon>
        <taxon>Gammaproteobacteria</taxon>
        <taxon>Enterobacterales</taxon>
        <taxon>Enterobacteriaceae</taxon>
        <taxon>Shigella</taxon>
    </lineage>
</organism>
<reference key="1">
    <citation type="journal article" date="2005" name="Nucleic Acids Res.">
        <title>Genome dynamics and diversity of Shigella species, the etiologic agents of bacillary dysentery.</title>
        <authorList>
            <person name="Yang F."/>
            <person name="Yang J."/>
            <person name="Zhang X."/>
            <person name="Chen L."/>
            <person name="Jiang Y."/>
            <person name="Yan Y."/>
            <person name="Tang X."/>
            <person name="Wang J."/>
            <person name="Xiong Z."/>
            <person name="Dong J."/>
            <person name="Xue Y."/>
            <person name="Zhu Y."/>
            <person name="Xu X."/>
            <person name="Sun L."/>
            <person name="Chen S."/>
            <person name="Nie H."/>
            <person name="Peng J."/>
            <person name="Xu J."/>
            <person name="Wang Y."/>
            <person name="Yuan Z."/>
            <person name="Wen Y."/>
            <person name="Yao Z."/>
            <person name="Shen Y."/>
            <person name="Qiang B."/>
            <person name="Hou Y."/>
            <person name="Yu J."/>
            <person name="Jin Q."/>
        </authorList>
    </citation>
    <scope>NUCLEOTIDE SEQUENCE [LARGE SCALE GENOMIC DNA]</scope>
    <source>
        <strain>Ss046</strain>
    </source>
</reference>
<protein>
    <recommendedName>
        <fullName evidence="1">Queuine tRNA-ribosyltransferase</fullName>
        <ecNumber evidence="1">2.4.2.29</ecNumber>
    </recommendedName>
    <alternativeName>
        <fullName evidence="1">Guanine insertion enzyme</fullName>
    </alternativeName>
    <alternativeName>
        <fullName evidence="1">tRNA-guanine transglycosylase</fullName>
    </alternativeName>
</protein>